<accession>Q927S9</accession>
<reference key="1">
    <citation type="journal article" date="2001" name="Science">
        <title>Comparative genomics of Listeria species.</title>
        <authorList>
            <person name="Glaser P."/>
            <person name="Frangeul L."/>
            <person name="Buchrieser C."/>
            <person name="Rusniok C."/>
            <person name="Amend A."/>
            <person name="Baquero F."/>
            <person name="Berche P."/>
            <person name="Bloecker H."/>
            <person name="Brandt P."/>
            <person name="Chakraborty T."/>
            <person name="Charbit A."/>
            <person name="Chetouani F."/>
            <person name="Couve E."/>
            <person name="de Daruvar A."/>
            <person name="Dehoux P."/>
            <person name="Domann E."/>
            <person name="Dominguez-Bernal G."/>
            <person name="Duchaud E."/>
            <person name="Durant L."/>
            <person name="Dussurget O."/>
            <person name="Entian K.-D."/>
            <person name="Fsihi H."/>
            <person name="Garcia-del Portillo F."/>
            <person name="Garrido P."/>
            <person name="Gautier L."/>
            <person name="Goebel W."/>
            <person name="Gomez-Lopez N."/>
            <person name="Hain T."/>
            <person name="Hauf J."/>
            <person name="Jackson D."/>
            <person name="Jones L.-M."/>
            <person name="Kaerst U."/>
            <person name="Kreft J."/>
            <person name="Kuhn M."/>
            <person name="Kunst F."/>
            <person name="Kurapkat G."/>
            <person name="Madueno E."/>
            <person name="Maitournam A."/>
            <person name="Mata Vicente J."/>
            <person name="Ng E."/>
            <person name="Nedjari H."/>
            <person name="Nordsiek G."/>
            <person name="Novella S."/>
            <person name="de Pablos B."/>
            <person name="Perez-Diaz J.-C."/>
            <person name="Purcell R."/>
            <person name="Remmel B."/>
            <person name="Rose M."/>
            <person name="Schlueter T."/>
            <person name="Simoes N."/>
            <person name="Tierrez A."/>
            <person name="Vazquez-Boland J.-A."/>
            <person name="Voss H."/>
            <person name="Wehland J."/>
            <person name="Cossart P."/>
        </authorList>
    </citation>
    <scope>NUCLEOTIDE SEQUENCE [LARGE SCALE GENOMIC DNA]</scope>
    <source>
        <strain>ATCC BAA-680 / CLIP 11262</strain>
    </source>
</reference>
<name>Y2709_LISIN</name>
<evidence type="ECO:0000250" key="1"/>
<evidence type="ECO:0000305" key="2"/>
<gene>
    <name type="ordered locus">lin2709</name>
</gene>
<dbReference type="EC" id="5.3.2.-"/>
<dbReference type="EMBL" id="AL596173">
    <property type="protein sequence ID" value="CAC97935.1"/>
    <property type="molecule type" value="Genomic_DNA"/>
</dbReference>
<dbReference type="PIR" id="AG1770">
    <property type="entry name" value="AG1770"/>
</dbReference>
<dbReference type="RefSeq" id="WP_010991343.1">
    <property type="nucleotide sequence ID" value="NC_003212.1"/>
</dbReference>
<dbReference type="SMR" id="Q927S9"/>
<dbReference type="STRING" id="272626.gene:17567089"/>
<dbReference type="KEGG" id="lin:lin2709"/>
<dbReference type="eggNOG" id="COG1942">
    <property type="taxonomic scope" value="Bacteria"/>
</dbReference>
<dbReference type="HOGENOM" id="CLU_148073_5_1_9"/>
<dbReference type="Proteomes" id="UP000002513">
    <property type="component" value="Chromosome"/>
</dbReference>
<dbReference type="GO" id="GO:0016853">
    <property type="term" value="F:isomerase activity"/>
    <property type="evidence" value="ECO:0007669"/>
    <property type="project" value="UniProtKB-KW"/>
</dbReference>
<dbReference type="CDD" id="cd00491">
    <property type="entry name" value="4Oxalocrotonate_Tautomerase"/>
    <property type="match status" value="1"/>
</dbReference>
<dbReference type="Gene3D" id="3.30.429.10">
    <property type="entry name" value="Macrophage Migration Inhibitory Factor"/>
    <property type="match status" value="1"/>
</dbReference>
<dbReference type="InterPro" id="IPR018191">
    <property type="entry name" value="4-OT"/>
</dbReference>
<dbReference type="InterPro" id="IPR004370">
    <property type="entry name" value="4-OT-like_dom"/>
</dbReference>
<dbReference type="InterPro" id="IPR014347">
    <property type="entry name" value="Tautomerase/MIF_sf"/>
</dbReference>
<dbReference type="NCBIfam" id="NF002571">
    <property type="entry name" value="PRK02220.1"/>
    <property type="match status" value="1"/>
</dbReference>
<dbReference type="NCBIfam" id="TIGR00013">
    <property type="entry name" value="taut"/>
    <property type="match status" value="1"/>
</dbReference>
<dbReference type="PANTHER" id="PTHR35530:SF1">
    <property type="entry name" value="2-HYDROXYMUCONATE TAUTOMERASE"/>
    <property type="match status" value="1"/>
</dbReference>
<dbReference type="PANTHER" id="PTHR35530">
    <property type="entry name" value="TAUTOMERASE-RELATED"/>
    <property type="match status" value="1"/>
</dbReference>
<dbReference type="Pfam" id="PF01361">
    <property type="entry name" value="Tautomerase"/>
    <property type="match status" value="1"/>
</dbReference>
<dbReference type="SUPFAM" id="SSF55331">
    <property type="entry name" value="Tautomerase/MIF"/>
    <property type="match status" value="1"/>
</dbReference>
<organism>
    <name type="scientific">Listeria innocua serovar 6a (strain ATCC BAA-680 / CLIP 11262)</name>
    <dbReference type="NCBI Taxonomy" id="272626"/>
    <lineage>
        <taxon>Bacteria</taxon>
        <taxon>Bacillati</taxon>
        <taxon>Bacillota</taxon>
        <taxon>Bacilli</taxon>
        <taxon>Bacillales</taxon>
        <taxon>Listeriaceae</taxon>
        <taxon>Listeria</taxon>
    </lineage>
</organism>
<proteinExistence type="inferred from homology"/>
<sequence length="61" mass="6833">MPFVTIQFLEGRSDDQKKALVSEVTDVVSKNLKAPKENIHVILEEMKKTDYGVGGVRKSDI</sequence>
<comment type="similarity">
    <text evidence="2">Belongs to the 4-oxalocrotonate tautomerase family.</text>
</comment>
<feature type="initiator methionine" description="Removed" evidence="1">
    <location>
        <position position="1"/>
    </location>
</feature>
<feature type="chain" id="PRO_0000209534" description="Probable tautomerase lin2709">
    <location>
        <begin position="2"/>
        <end position="61"/>
    </location>
</feature>
<feature type="active site" description="Proton acceptor; via imino nitrogen" evidence="1">
    <location>
        <position position="2"/>
    </location>
</feature>
<protein>
    <recommendedName>
        <fullName>Probable tautomerase lin2709</fullName>
        <ecNumber>5.3.2.-</ecNumber>
    </recommendedName>
</protein>
<keyword id="KW-0413">Isomerase</keyword>